<sequence length="365" mass="41863">MLVPSDMIAAQSKMVYQMNKYCADRVQVRKAQIHKQIQEVCRIVQDVLKEVEVQEPRFISSLNDYNGRFQGLEVISPTEFEIIIYLNQMGVLNFVDDGTLPGCAVLKLSDGRKRSMSLWVEFITASGYLSARKIRSRFQTLVAQACDKCAYRDIVKMIADTTEVKLRIRERIIVQITPAFKCAGLWPRSASHWPLPGIPWPHPNIVAEVKTEGFNMLSKECIALQGKNSAMEGDAWVLSFTDAENRLLQGASRRRCLSILKTLRDRHLDLPGNPVTSYHLKTLLLYECEKHPREMEWEENCIADRINGIFLQLISCLQCRRCPHYFLPNMDLFKGKSPGALENAAKQVWRLTRIMLTNVRCLEEL</sequence>
<reference key="1">
    <citation type="submission" date="1999-12" db="EMBL/GenBank/DDBJ databases">
        <title>A reverse genetic screen for genes involved in Drosophila development.</title>
        <authorList>
            <person name="Serano T.L."/>
            <person name="Pendleton J.D."/>
            <person name="Rubin G.M."/>
        </authorList>
    </citation>
    <scope>NUCLEOTIDE SEQUENCE [MRNA]</scope>
</reference>
<reference key="2">
    <citation type="journal article" date="2000" name="Science">
        <title>The genome sequence of Drosophila melanogaster.</title>
        <authorList>
            <person name="Adams M.D."/>
            <person name="Celniker S.E."/>
            <person name="Holt R.A."/>
            <person name="Evans C.A."/>
            <person name="Gocayne J.D."/>
            <person name="Amanatides P.G."/>
            <person name="Scherer S.E."/>
            <person name="Li P.W."/>
            <person name="Hoskins R.A."/>
            <person name="Galle R.F."/>
            <person name="George R.A."/>
            <person name="Lewis S.E."/>
            <person name="Richards S."/>
            <person name="Ashburner M."/>
            <person name="Henderson S.N."/>
            <person name="Sutton G.G."/>
            <person name="Wortman J.R."/>
            <person name="Yandell M.D."/>
            <person name="Zhang Q."/>
            <person name="Chen L.X."/>
            <person name="Brandon R.C."/>
            <person name="Rogers Y.-H.C."/>
            <person name="Blazej R.G."/>
            <person name="Champe M."/>
            <person name="Pfeiffer B.D."/>
            <person name="Wan K.H."/>
            <person name="Doyle C."/>
            <person name="Baxter E.G."/>
            <person name="Helt G."/>
            <person name="Nelson C.R."/>
            <person name="Miklos G.L.G."/>
            <person name="Abril J.F."/>
            <person name="Agbayani A."/>
            <person name="An H.-J."/>
            <person name="Andrews-Pfannkoch C."/>
            <person name="Baldwin D."/>
            <person name="Ballew R.M."/>
            <person name="Basu A."/>
            <person name="Baxendale J."/>
            <person name="Bayraktaroglu L."/>
            <person name="Beasley E.M."/>
            <person name="Beeson K.Y."/>
            <person name="Benos P.V."/>
            <person name="Berman B.P."/>
            <person name="Bhandari D."/>
            <person name="Bolshakov S."/>
            <person name="Borkova D."/>
            <person name="Botchan M.R."/>
            <person name="Bouck J."/>
            <person name="Brokstein P."/>
            <person name="Brottier P."/>
            <person name="Burtis K.C."/>
            <person name="Busam D.A."/>
            <person name="Butler H."/>
            <person name="Cadieu E."/>
            <person name="Center A."/>
            <person name="Chandra I."/>
            <person name="Cherry J.M."/>
            <person name="Cawley S."/>
            <person name="Dahlke C."/>
            <person name="Davenport L.B."/>
            <person name="Davies P."/>
            <person name="de Pablos B."/>
            <person name="Delcher A."/>
            <person name="Deng Z."/>
            <person name="Mays A.D."/>
            <person name="Dew I."/>
            <person name="Dietz S.M."/>
            <person name="Dodson K."/>
            <person name="Doup L.E."/>
            <person name="Downes M."/>
            <person name="Dugan-Rocha S."/>
            <person name="Dunkov B.C."/>
            <person name="Dunn P."/>
            <person name="Durbin K.J."/>
            <person name="Evangelista C.C."/>
            <person name="Ferraz C."/>
            <person name="Ferriera S."/>
            <person name="Fleischmann W."/>
            <person name="Fosler C."/>
            <person name="Gabrielian A.E."/>
            <person name="Garg N.S."/>
            <person name="Gelbart W.M."/>
            <person name="Glasser K."/>
            <person name="Glodek A."/>
            <person name="Gong F."/>
            <person name="Gorrell J.H."/>
            <person name="Gu Z."/>
            <person name="Guan P."/>
            <person name="Harris M."/>
            <person name="Harris N.L."/>
            <person name="Harvey D.A."/>
            <person name="Heiman T.J."/>
            <person name="Hernandez J.R."/>
            <person name="Houck J."/>
            <person name="Hostin D."/>
            <person name="Houston K.A."/>
            <person name="Howland T.J."/>
            <person name="Wei M.-H."/>
            <person name="Ibegwam C."/>
            <person name="Jalali M."/>
            <person name="Kalush F."/>
            <person name="Karpen G.H."/>
            <person name="Ke Z."/>
            <person name="Kennison J.A."/>
            <person name="Ketchum K.A."/>
            <person name="Kimmel B.E."/>
            <person name="Kodira C.D."/>
            <person name="Kraft C.L."/>
            <person name="Kravitz S."/>
            <person name="Kulp D."/>
            <person name="Lai Z."/>
            <person name="Lasko P."/>
            <person name="Lei Y."/>
            <person name="Levitsky A.A."/>
            <person name="Li J.H."/>
            <person name="Li Z."/>
            <person name="Liang Y."/>
            <person name="Lin X."/>
            <person name="Liu X."/>
            <person name="Mattei B."/>
            <person name="McIntosh T.C."/>
            <person name="McLeod M.P."/>
            <person name="McPherson D."/>
            <person name="Merkulov G."/>
            <person name="Milshina N.V."/>
            <person name="Mobarry C."/>
            <person name="Morris J."/>
            <person name="Moshrefi A."/>
            <person name="Mount S.M."/>
            <person name="Moy M."/>
            <person name="Murphy B."/>
            <person name="Murphy L."/>
            <person name="Muzny D.M."/>
            <person name="Nelson D.L."/>
            <person name="Nelson D.R."/>
            <person name="Nelson K.A."/>
            <person name="Nixon K."/>
            <person name="Nusskern D.R."/>
            <person name="Pacleb J.M."/>
            <person name="Palazzolo M."/>
            <person name="Pittman G.S."/>
            <person name="Pan S."/>
            <person name="Pollard J."/>
            <person name="Puri V."/>
            <person name="Reese M.G."/>
            <person name="Reinert K."/>
            <person name="Remington K."/>
            <person name="Saunders R.D.C."/>
            <person name="Scheeler F."/>
            <person name="Shen H."/>
            <person name="Shue B.C."/>
            <person name="Siden-Kiamos I."/>
            <person name="Simpson M."/>
            <person name="Skupski M.P."/>
            <person name="Smith T.J."/>
            <person name="Spier E."/>
            <person name="Spradling A.C."/>
            <person name="Stapleton M."/>
            <person name="Strong R."/>
            <person name="Sun E."/>
            <person name="Svirskas R."/>
            <person name="Tector C."/>
            <person name="Turner R."/>
            <person name="Venter E."/>
            <person name="Wang A.H."/>
            <person name="Wang X."/>
            <person name="Wang Z.-Y."/>
            <person name="Wassarman D.A."/>
            <person name="Weinstock G.M."/>
            <person name="Weissenbach J."/>
            <person name="Williams S.M."/>
            <person name="Woodage T."/>
            <person name="Worley K.C."/>
            <person name="Wu D."/>
            <person name="Yang S."/>
            <person name="Yao Q.A."/>
            <person name="Ye J."/>
            <person name="Yeh R.-F."/>
            <person name="Zaveri J.S."/>
            <person name="Zhan M."/>
            <person name="Zhang G."/>
            <person name="Zhao Q."/>
            <person name="Zheng L."/>
            <person name="Zheng X.H."/>
            <person name="Zhong F.N."/>
            <person name="Zhong W."/>
            <person name="Zhou X."/>
            <person name="Zhu S.C."/>
            <person name="Zhu X."/>
            <person name="Smith H.O."/>
            <person name="Gibbs R.A."/>
            <person name="Myers E.W."/>
            <person name="Rubin G.M."/>
            <person name="Venter J.C."/>
        </authorList>
    </citation>
    <scope>NUCLEOTIDE SEQUENCE [LARGE SCALE GENOMIC DNA]</scope>
    <source>
        <strain>Berkeley</strain>
    </source>
</reference>
<reference key="3">
    <citation type="journal article" date="2002" name="Genome Biol.">
        <title>Annotation of the Drosophila melanogaster euchromatic genome: a systematic review.</title>
        <authorList>
            <person name="Misra S."/>
            <person name="Crosby M.A."/>
            <person name="Mungall C.J."/>
            <person name="Matthews B.B."/>
            <person name="Campbell K.S."/>
            <person name="Hradecky P."/>
            <person name="Huang Y."/>
            <person name="Kaminker J.S."/>
            <person name="Millburn G.H."/>
            <person name="Prochnik S.E."/>
            <person name="Smith C.D."/>
            <person name="Tupy J.L."/>
            <person name="Whitfield E.J."/>
            <person name="Bayraktaroglu L."/>
            <person name="Berman B.P."/>
            <person name="Bettencourt B.R."/>
            <person name="Celniker S.E."/>
            <person name="de Grey A.D.N.J."/>
            <person name="Drysdale R.A."/>
            <person name="Harris N.L."/>
            <person name="Richter J."/>
            <person name="Russo S."/>
            <person name="Schroeder A.J."/>
            <person name="Shu S.Q."/>
            <person name="Stapleton M."/>
            <person name="Yamada C."/>
            <person name="Ashburner M."/>
            <person name="Gelbart W.M."/>
            <person name="Rubin G.M."/>
            <person name="Lewis S.E."/>
        </authorList>
    </citation>
    <scope>GENOME REANNOTATION</scope>
    <source>
        <strain>Berkeley</strain>
    </source>
</reference>
<reference key="4">
    <citation type="journal article" date="2002" name="Genome Biol.">
        <title>A Drosophila full-length cDNA resource.</title>
        <authorList>
            <person name="Stapleton M."/>
            <person name="Carlson J.W."/>
            <person name="Brokstein P."/>
            <person name="Yu C."/>
            <person name="Champe M."/>
            <person name="George R.A."/>
            <person name="Guarin H."/>
            <person name="Kronmiller B."/>
            <person name="Pacleb J.M."/>
            <person name="Park S."/>
            <person name="Wan K.H."/>
            <person name="Rubin G.M."/>
            <person name="Celniker S.E."/>
        </authorList>
    </citation>
    <scope>NUCLEOTIDE SEQUENCE [LARGE SCALE MRNA]</scope>
    <source>
        <strain>Berkeley</strain>
        <tissue>Embryo</tissue>
    </source>
</reference>
<evidence type="ECO:0000305" key="1"/>
<gene>
    <name type="primary">mab-21</name>
    <name type="ORF">CG4746</name>
</gene>
<protein>
    <recommendedName>
        <fullName>Protein mab-21</fullName>
    </recommendedName>
</protein>
<dbReference type="EMBL" id="AF214524">
    <property type="protein sequence ID" value="AAF24503.1"/>
    <property type="status" value="ALT_INIT"/>
    <property type="molecule type" value="mRNA"/>
</dbReference>
<dbReference type="EMBL" id="AE014298">
    <property type="protein sequence ID" value="AAF46112.2"/>
    <property type="molecule type" value="Genomic_DNA"/>
</dbReference>
<dbReference type="EMBL" id="AY128466">
    <property type="protein sequence ID" value="AAM75059.1"/>
    <property type="molecule type" value="mRNA"/>
</dbReference>
<dbReference type="RefSeq" id="NP_651971.2">
    <property type="nucleotide sequence ID" value="NM_143714.4"/>
</dbReference>
<dbReference type="SMR" id="Q9U3W6"/>
<dbReference type="BioGRID" id="68848">
    <property type="interactions" value="2"/>
</dbReference>
<dbReference type="FunCoup" id="Q9U3W6">
    <property type="interactions" value="242"/>
</dbReference>
<dbReference type="IntAct" id="Q9U3W6">
    <property type="interactions" value="2"/>
</dbReference>
<dbReference type="STRING" id="7227.FBpp0070855"/>
<dbReference type="PaxDb" id="7227-FBpp0070855"/>
<dbReference type="DNASU" id="44127"/>
<dbReference type="EnsemblMetazoa" id="FBtr0070890">
    <property type="protein sequence ID" value="FBpp0070855"/>
    <property type="gene ID" value="FBgn0029003"/>
</dbReference>
<dbReference type="GeneID" id="44127"/>
<dbReference type="KEGG" id="dme:Dmel_CG4746"/>
<dbReference type="UCSC" id="CG4746-RA">
    <property type="organism name" value="d. melanogaster"/>
</dbReference>
<dbReference type="AGR" id="FB:FBgn0029003"/>
<dbReference type="CTD" id="44127"/>
<dbReference type="FlyBase" id="FBgn0029003">
    <property type="gene designation" value="mab-21"/>
</dbReference>
<dbReference type="VEuPathDB" id="VectorBase:FBgn0029003"/>
<dbReference type="eggNOG" id="KOG3963">
    <property type="taxonomic scope" value="Eukaryota"/>
</dbReference>
<dbReference type="GeneTree" id="ENSGT01050000244827"/>
<dbReference type="HOGENOM" id="CLU_045315_0_0_1"/>
<dbReference type="InParanoid" id="Q9U3W6"/>
<dbReference type="OrthoDB" id="5961151at2759"/>
<dbReference type="PhylomeDB" id="Q9U3W6"/>
<dbReference type="BioGRID-ORCS" id="44127">
    <property type="hits" value="0 hits in 3 CRISPR screens"/>
</dbReference>
<dbReference type="GenomeRNAi" id="44127"/>
<dbReference type="PRO" id="PR:Q9U3W6"/>
<dbReference type="Proteomes" id="UP000000803">
    <property type="component" value="Chromosome X"/>
</dbReference>
<dbReference type="Bgee" id="FBgn0029003">
    <property type="expression patterns" value="Expressed in mechanosensory neuron (Drosophila) in haltere and 71 other cell types or tissues"/>
</dbReference>
<dbReference type="GO" id="GO:0005737">
    <property type="term" value="C:cytoplasm"/>
    <property type="evidence" value="ECO:0000250"/>
    <property type="project" value="FlyBase"/>
</dbReference>
<dbReference type="GO" id="GO:0005634">
    <property type="term" value="C:nucleus"/>
    <property type="evidence" value="ECO:0000250"/>
    <property type="project" value="FlyBase"/>
</dbReference>
<dbReference type="GO" id="GO:0001654">
    <property type="term" value="P:eye development"/>
    <property type="evidence" value="ECO:0000250"/>
    <property type="project" value="FlyBase"/>
</dbReference>
<dbReference type="FunFam" id="1.10.1410.40:FF:000002">
    <property type="entry name" value="protein mab-21-like 1"/>
    <property type="match status" value="1"/>
</dbReference>
<dbReference type="FunFam" id="3.30.460.90:FF:000001">
    <property type="entry name" value="protein mab-21-like 2"/>
    <property type="match status" value="1"/>
</dbReference>
<dbReference type="Gene3D" id="1.10.1410.40">
    <property type="match status" value="1"/>
</dbReference>
<dbReference type="Gene3D" id="3.30.460.90">
    <property type="match status" value="1"/>
</dbReference>
<dbReference type="InterPro" id="IPR046903">
    <property type="entry name" value="Mab-21-like_nuc_Trfase"/>
</dbReference>
<dbReference type="InterPro" id="IPR046906">
    <property type="entry name" value="Mab-21_HhH/H2TH-like"/>
</dbReference>
<dbReference type="InterPro" id="IPR024810">
    <property type="entry name" value="MAB21L/cGLR"/>
</dbReference>
<dbReference type="PANTHER" id="PTHR10656">
    <property type="entry name" value="CELL FATE DETERMINING PROTEIN MAB21-RELATED"/>
    <property type="match status" value="1"/>
</dbReference>
<dbReference type="PANTHER" id="PTHR10656:SF70">
    <property type="entry name" value="PROTEIN MAB-21-RELATED"/>
    <property type="match status" value="1"/>
</dbReference>
<dbReference type="Pfam" id="PF03281">
    <property type="entry name" value="Mab-21"/>
    <property type="match status" value="1"/>
</dbReference>
<dbReference type="Pfam" id="PF20266">
    <property type="entry name" value="Mab-21_C"/>
    <property type="match status" value="1"/>
</dbReference>
<dbReference type="SMART" id="SM01265">
    <property type="entry name" value="Mab-21"/>
    <property type="match status" value="1"/>
</dbReference>
<proteinExistence type="evidence at transcript level"/>
<organism>
    <name type="scientific">Drosophila melanogaster</name>
    <name type="common">Fruit fly</name>
    <dbReference type="NCBI Taxonomy" id="7227"/>
    <lineage>
        <taxon>Eukaryota</taxon>
        <taxon>Metazoa</taxon>
        <taxon>Ecdysozoa</taxon>
        <taxon>Arthropoda</taxon>
        <taxon>Hexapoda</taxon>
        <taxon>Insecta</taxon>
        <taxon>Pterygota</taxon>
        <taxon>Neoptera</taxon>
        <taxon>Endopterygota</taxon>
        <taxon>Diptera</taxon>
        <taxon>Brachycera</taxon>
        <taxon>Muscomorpha</taxon>
        <taxon>Ephydroidea</taxon>
        <taxon>Drosophilidae</taxon>
        <taxon>Drosophila</taxon>
        <taxon>Sophophora</taxon>
    </lineage>
</organism>
<feature type="chain" id="PRO_0000312795" description="Protein mab-21">
    <location>
        <begin position="1"/>
        <end position="365"/>
    </location>
</feature>
<feature type="sequence conflict" description="In Ref. 1; AAF24503." evidence="1" ref="1">
    <original>Q</original>
    <variation>E</variation>
    <location>
        <position position="70"/>
    </location>
</feature>
<feature type="sequence conflict" description="In Ref. 1; AAF24503." evidence="1" ref="1">
    <original>N</original>
    <variation>D</variation>
    <location>
        <position position="215"/>
    </location>
</feature>
<accession>Q9U3W6</accession>
<accession>Q9W447</accession>
<keyword id="KW-1185">Reference proteome</keyword>
<comment type="similarity">
    <text evidence="1">Belongs to the mab-21 family.</text>
</comment>
<comment type="caution">
    <text evidence="1">It is uncertain whether Met-1 or Met-7 is the initiator.</text>
</comment>
<comment type="sequence caution" evidence="1">
    <conflict type="erroneous initiation">
        <sequence resource="EMBL-CDS" id="AAF24503"/>
    </conflict>
</comment>
<name>MAB21_DROME</name>